<gene>
    <name evidence="1" type="primary">rplU</name>
    <name type="ordered locus">MW1597</name>
</gene>
<dbReference type="EMBL" id="BA000033">
    <property type="protein sequence ID" value="BAB95462.1"/>
    <property type="molecule type" value="Genomic_DNA"/>
</dbReference>
<dbReference type="RefSeq" id="WP_000457386.1">
    <property type="nucleotide sequence ID" value="NC_003923.1"/>
</dbReference>
<dbReference type="PDB" id="8Y36">
    <property type="method" value="EM"/>
    <property type="resolution" value="2.65 A"/>
    <property type="chains" value="P=1-102"/>
</dbReference>
<dbReference type="PDB" id="8Y37">
    <property type="method" value="EM"/>
    <property type="resolution" value="2.53 A"/>
    <property type="chains" value="P=1-102"/>
</dbReference>
<dbReference type="PDB" id="8Y38">
    <property type="method" value="EM"/>
    <property type="resolution" value="2.58 A"/>
    <property type="chains" value="P=1-102"/>
</dbReference>
<dbReference type="PDB" id="8Y39">
    <property type="method" value="EM"/>
    <property type="resolution" value="3.60 A"/>
    <property type="chains" value="P=1-102"/>
</dbReference>
<dbReference type="PDBsum" id="8Y36"/>
<dbReference type="PDBsum" id="8Y37"/>
<dbReference type="PDBsum" id="8Y38"/>
<dbReference type="PDBsum" id="8Y39"/>
<dbReference type="EMDB" id="EMD-38873"/>
<dbReference type="EMDB" id="EMD-38874"/>
<dbReference type="EMDB" id="EMD-38875"/>
<dbReference type="EMDB" id="EMD-38876"/>
<dbReference type="SMR" id="Q7A0Q2"/>
<dbReference type="GeneID" id="66839833"/>
<dbReference type="KEGG" id="sam:MW1597"/>
<dbReference type="HOGENOM" id="CLU_061463_3_2_9"/>
<dbReference type="GO" id="GO:0005737">
    <property type="term" value="C:cytoplasm"/>
    <property type="evidence" value="ECO:0007669"/>
    <property type="project" value="UniProtKB-ARBA"/>
</dbReference>
<dbReference type="GO" id="GO:1990904">
    <property type="term" value="C:ribonucleoprotein complex"/>
    <property type="evidence" value="ECO:0007669"/>
    <property type="project" value="UniProtKB-KW"/>
</dbReference>
<dbReference type="GO" id="GO:0005840">
    <property type="term" value="C:ribosome"/>
    <property type="evidence" value="ECO:0007669"/>
    <property type="project" value="UniProtKB-KW"/>
</dbReference>
<dbReference type="GO" id="GO:0019843">
    <property type="term" value="F:rRNA binding"/>
    <property type="evidence" value="ECO:0007669"/>
    <property type="project" value="UniProtKB-UniRule"/>
</dbReference>
<dbReference type="GO" id="GO:0003735">
    <property type="term" value="F:structural constituent of ribosome"/>
    <property type="evidence" value="ECO:0007669"/>
    <property type="project" value="InterPro"/>
</dbReference>
<dbReference type="GO" id="GO:0006412">
    <property type="term" value="P:translation"/>
    <property type="evidence" value="ECO:0007669"/>
    <property type="project" value="UniProtKB-UniRule"/>
</dbReference>
<dbReference type="HAMAP" id="MF_01363">
    <property type="entry name" value="Ribosomal_bL21"/>
    <property type="match status" value="1"/>
</dbReference>
<dbReference type="InterPro" id="IPR028909">
    <property type="entry name" value="bL21-like"/>
</dbReference>
<dbReference type="InterPro" id="IPR036164">
    <property type="entry name" value="bL21-like_sf"/>
</dbReference>
<dbReference type="InterPro" id="IPR001787">
    <property type="entry name" value="Ribosomal_bL21"/>
</dbReference>
<dbReference type="NCBIfam" id="TIGR00061">
    <property type="entry name" value="L21"/>
    <property type="match status" value="1"/>
</dbReference>
<dbReference type="PANTHER" id="PTHR21349">
    <property type="entry name" value="50S RIBOSOMAL PROTEIN L21"/>
    <property type="match status" value="1"/>
</dbReference>
<dbReference type="PANTHER" id="PTHR21349:SF0">
    <property type="entry name" value="LARGE RIBOSOMAL SUBUNIT PROTEIN BL21M"/>
    <property type="match status" value="1"/>
</dbReference>
<dbReference type="Pfam" id="PF00829">
    <property type="entry name" value="Ribosomal_L21p"/>
    <property type="match status" value="1"/>
</dbReference>
<dbReference type="SUPFAM" id="SSF141091">
    <property type="entry name" value="L21p-like"/>
    <property type="match status" value="1"/>
</dbReference>
<name>RL21_STAAW</name>
<evidence type="ECO:0000255" key="1">
    <source>
        <dbReference type="HAMAP-Rule" id="MF_01363"/>
    </source>
</evidence>
<evidence type="ECO:0000256" key="2">
    <source>
        <dbReference type="SAM" id="MobiDB-lite"/>
    </source>
</evidence>
<evidence type="ECO:0000305" key="3"/>
<feature type="chain" id="PRO_0000224937" description="Large ribosomal subunit protein bL21">
    <location>
        <begin position="1"/>
        <end position="102"/>
    </location>
</feature>
<feature type="region of interest" description="Disordered" evidence="2">
    <location>
        <begin position="80"/>
        <end position="102"/>
    </location>
</feature>
<feature type="compositionally biased region" description="Basic residues" evidence="2">
    <location>
        <begin position="80"/>
        <end position="91"/>
    </location>
</feature>
<sequence length="102" mass="11333">MFAIIETGGKQIKVEEGQEIFVEKLDVNEGDTFTFDKVLFVGGDSVKVGAPTVEGATVTATVNKQGRGKKITVFTYKRRKNSKRKKGHRQPYTKLTIDKINA</sequence>
<accession>Q7A0Q2</accession>
<protein>
    <recommendedName>
        <fullName evidence="1">Large ribosomal subunit protein bL21</fullName>
    </recommendedName>
    <alternativeName>
        <fullName evidence="3">50S ribosomal protein L21</fullName>
    </alternativeName>
</protein>
<organism>
    <name type="scientific">Staphylococcus aureus (strain MW2)</name>
    <dbReference type="NCBI Taxonomy" id="196620"/>
    <lineage>
        <taxon>Bacteria</taxon>
        <taxon>Bacillati</taxon>
        <taxon>Bacillota</taxon>
        <taxon>Bacilli</taxon>
        <taxon>Bacillales</taxon>
        <taxon>Staphylococcaceae</taxon>
        <taxon>Staphylococcus</taxon>
    </lineage>
</organism>
<comment type="function">
    <text evidence="1">This protein binds to 23S rRNA in the presence of protein L20.</text>
</comment>
<comment type="subunit">
    <text evidence="1">Part of the 50S ribosomal subunit. Contacts protein L20.</text>
</comment>
<comment type="similarity">
    <text evidence="1">Belongs to the bacterial ribosomal protein bL21 family.</text>
</comment>
<proteinExistence type="evidence at protein level"/>
<reference key="1">
    <citation type="journal article" date="2002" name="Lancet">
        <title>Genome and virulence determinants of high virulence community-acquired MRSA.</title>
        <authorList>
            <person name="Baba T."/>
            <person name="Takeuchi F."/>
            <person name="Kuroda M."/>
            <person name="Yuzawa H."/>
            <person name="Aoki K."/>
            <person name="Oguchi A."/>
            <person name="Nagai Y."/>
            <person name="Iwama N."/>
            <person name="Asano K."/>
            <person name="Naimi T."/>
            <person name="Kuroda H."/>
            <person name="Cui L."/>
            <person name="Yamamoto K."/>
            <person name="Hiramatsu K."/>
        </authorList>
    </citation>
    <scope>NUCLEOTIDE SEQUENCE [LARGE SCALE GENOMIC DNA]</scope>
    <source>
        <strain>MW2</strain>
    </source>
</reference>
<keyword id="KW-0002">3D-structure</keyword>
<keyword id="KW-0687">Ribonucleoprotein</keyword>
<keyword id="KW-0689">Ribosomal protein</keyword>
<keyword id="KW-0694">RNA-binding</keyword>
<keyword id="KW-0699">rRNA-binding</keyword>